<organism>
    <name type="scientific">Rickettsia felis (strain ATCC VR-1525 / URRWXCal2)</name>
    <name type="common">Rickettsia azadi</name>
    <dbReference type="NCBI Taxonomy" id="315456"/>
    <lineage>
        <taxon>Bacteria</taxon>
        <taxon>Pseudomonadati</taxon>
        <taxon>Pseudomonadota</taxon>
        <taxon>Alphaproteobacteria</taxon>
        <taxon>Rickettsiales</taxon>
        <taxon>Rickettsiaceae</taxon>
        <taxon>Rickettsieae</taxon>
        <taxon>Rickettsia</taxon>
        <taxon>spotted fever group</taxon>
    </lineage>
</organism>
<sequence>MGDKIFHNLSGKTLVATPHAITKGIYHKSLIYMLSHTEEGAIGLIFNRLVNHIDLKSFFKIKNDEITTPVMVPIYLGGPVEHEKGFFLHSSDYNKNLLLDFQNDLAVSSNLEISEDIAFGKGPKNSLFIVGYTAWKPGQLEEELEKNLWLVMDCNKEFIFADNPESKWHNALKHLGIDEIHFSSQIGNA</sequence>
<comment type="similarity">
    <text evidence="1">Belongs to the UPF0301 (AlgH) family.</text>
</comment>
<proteinExistence type="inferred from homology"/>
<gene>
    <name type="ordered locus">RF_0044</name>
</gene>
<evidence type="ECO:0000255" key="1">
    <source>
        <dbReference type="HAMAP-Rule" id="MF_00758"/>
    </source>
</evidence>
<reference key="1">
    <citation type="journal article" date="2005" name="PLoS Biol.">
        <title>The genome sequence of Rickettsia felis identifies the first putative conjugative plasmid in an obligate intracellular parasite.</title>
        <authorList>
            <person name="Ogata H."/>
            <person name="Renesto P."/>
            <person name="Audic S."/>
            <person name="Robert C."/>
            <person name="Blanc G."/>
            <person name="Fournier P.-E."/>
            <person name="Parinello H."/>
            <person name="Claverie J.-M."/>
            <person name="Raoult D."/>
        </authorList>
    </citation>
    <scope>NUCLEOTIDE SEQUENCE [LARGE SCALE GENOMIC DNA]</scope>
    <source>
        <strain>ATCC VR-1525 / URRWXCal2</strain>
    </source>
</reference>
<name>Y044_RICFE</name>
<feature type="chain" id="PRO_0000258874" description="UPF0301 protein RF_0044">
    <location>
        <begin position="1"/>
        <end position="189"/>
    </location>
</feature>
<accession>Q4UNH2</accession>
<dbReference type="EMBL" id="CP000053">
    <property type="protein sequence ID" value="AAY60895.1"/>
    <property type="molecule type" value="Genomic_DNA"/>
</dbReference>
<dbReference type="SMR" id="Q4UNH2"/>
<dbReference type="STRING" id="315456.RF_0044"/>
<dbReference type="KEGG" id="rfe:RF_0044"/>
<dbReference type="eggNOG" id="COG1678">
    <property type="taxonomic scope" value="Bacteria"/>
</dbReference>
<dbReference type="HOGENOM" id="CLU_057596_1_0_5"/>
<dbReference type="OrthoDB" id="9807486at2"/>
<dbReference type="Proteomes" id="UP000008548">
    <property type="component" value="Chromosome"/>
</dbReference>
<dbReference type="GO" id="GO:0005829">
    <property type="term" value="C:cytosol"/>
    <property type="evidence" value="ECO:0007669"/>
    <property type="project" value="TreeGrafter"/>
</dbReference>
<dbReference type="Gene3D" id="3.40.1740.10">
    <property type="entry name" value="VC0467-like"/>
    <property type="match status" value="1"/>
</dbReference>
<dbReference type="HAMAP" id="MF_00758">
    <property type="entry name" value="UPF0301"/>
    <property type="match status" value="1"/>
</dbReference>
<dbReference type="InterPro" id="IPR003774">
    <property type="entry name" value="AlgH-like"/>
</dbReference>
<dbReference type="NCBIfam" id="NF001268">
    <property type="entry name" value="PRK00228.1-4"/>
    <property type="match status" value="1"/>
</dbReference>
<dbReference type="PANTHER" id="PTHR30327">
    <property type="entry name" value="UNCHARACTERIZED PROTEIN YQGE"/>
    <property type="match status" value="1"/>
</dbReference>
<dbReference type="PANTHER" id="PTHR30327:SF1">
    <property type="entry name" value="UPF0301 PROTEIN YQGE"/>
    <property type="match status" value="1"/>
</dbReference>
<dbReference type="Pfam" id="PF02622">
    <property type="entry name" value="DUF179"/>
    <property type="match status" value="1"/>
</dbReference>
<dbReference type="SUPFAM" id="SSF143456">
    <property type="entry name" value="VC0467-like"/>
    <property type="match status" value="1"/>
</dbReference>
<protein>
    <recommendedName>
        <fullName evidence="1">UPF0301 protein RF_0044</fullName>
    </recommendedName>
</protein>